<sequence>MTSSANLRPDIVLIGAGIMGATFGTLLKELNPSYSMMMFERLSDCGQESSQSWNNAGTGHAANCELNYTPQRPDGTVEITQALRVNTEFDLSRQLWSYLVTKGAIPDPQSFIHPCPHMSMVWGAENVAFLKARFQAMSAHHCYHGMEYTEDGAQIEKWAPLTMEGRDPAEPVAATRIITGTDVDYGSLTHLLVAHLKAQPDFDLHYNTEVEGLDREPDGRWRVTFKDVNSGERHSVSAGFVFIGAGGASIDLLQKSNIPEGKGYGGFPVSGIWLRCDVDAVTQRHHAKVYGKASSGSPPMSVPHLDTRVIDGKTSLLFGPYAGFSTKFLKHGSLTDLFGSITLHNIGPLLDVGRHNIELTEYLIAQVLQTHHHQFEMLKAFFPNAKRADWKEAVAGQRVQVIKPYPDGGGFLEFGTEIVPAADHSLVALLGASPGASTAAAIALEVLEACFADRLTDDAWLPALKRIIPTYGIDLREDAEACRASRAATASVLNIDNI</sequence>
<accession>Q0BTB0</accession>
<proteinExistence type="inferred from homology"/>
<reference key="1">
    <citation type="journal article" date="2007" name="J. Bacteriol.">
        <title>Genome sequence analysis of the emerging human pathogenic acetic acid bacterium Granulibacter bethesdensis.</title>
        <authorList>
            <person name="Greenberg D.E."/>
            <person name="Porcella S.F."/>
            <person name="Zelazny A.M."/>
            <person name="Virtaneva K."/>
            <person name="Sturdevant D.E."/>
            <person name="Kupko J.J. III"/>
            <person name="Barbian K.D."/>
            <person name="Babar A."/>
            <person name="Dorward D.W."/>
            <person name="Holland S.M."/>
        </authorList>
    </citation>
    <scope>NUCLEOTIDE SEQUENCE [LARGE SCALE GENOMIC DNA]</scope>
    <source>
        <strain>ATCC BAA-1260 / CGDNIH1</strain>
    </source>
</reference>
<keyword id="KW-0274">FAD</keyword>
<keyword id="KW-0285">Flavoprotein</keyword>
<keyword id="KW-0560">Oxidoreductase</keyword>
<keyword id="KW-1185">Reference proteome</keyword>
<keyword id="KW-0816">Tricarboxylic acid cycle</keyword>
<dbReference type="EC" id="1.1.5.4" evidence="1"/>
<dbReference type="EMBL" id="CP000394">
    <property type="protein sequence ID" value="ABI61942.1"/>
    <property type="molecule type" value="Genomic_DNA"/>
</dbReference>
<dbReference type="RefSeq" id="WP_011631751.1">
    <property type="nucleotide sequence ID" value="NC_008343.2"/>
</dbReference>
<dbReference type="SMR" id="Q0BTB0"/>
<dbReference type="STRING" id="391165.GbCGDNIH1_1044"/>
<dbReference type="KEGG" id="gbe:GbCGDNIH1_1044"/>
<dbReference type="eggNOG" id="COG0579">
    <property type="taxonomic scope" value="Bacteria"/>
</dbReference>
<dbReference type="HOGENOM" id="CLU_028151_0_0_5"/>
<dbReference type="OrthoDB" id="9763983at2"/>
<dbReference type="UniPathway" id="UPA00223">
    <property type="reaction ID" value="UER01008"/>
</dbReference>
<dbReference type="Proteomes" id="UP000001963">
    <property type="component" value="Chromosome"/>
</dbReference>
<dbReference type="GO" id="GO:0047545">
    <property type="term" value="F:2-hydroxyglutarate dehydrogenase activity"/>
    <property type="evidence" value="ECO:0007669"/>
    <property type="project" value="TreeGrafter"/>
</dbReference>
<dbReference type="GO" id="GO:0008924">
    <property type="term" value="F:L-malate dehydrogenase (quinone) activity"/>
    <property type="evidence" value="ECO:0007669"/>
    <property type="project" value="UniProtKB-UniRule"/>
</dbReference>
<dbReference type="GO" id="GO:0006099">
    <property type="term" value="P:tricarboxylic acid cycle"/>
    <property type="evidence" value="ECO:0007669"/>
    <property type="project" value="UniProtKB-UniRule"/>
</dbReference>
<dbReference type="Gene3D" id="3.30.9.10">
    <property type="entry name" value="D-Amino Acid Oxidase, subunit A, domain 2"/>
    <property type="match status" value="1"/>
</dbReference>
<dbReference type="Gene3D" id="3.50.50.60">
    <property type="entry name" value="FAD/NAD(P)-binding domain"/>
    <property type="match status" value="1"/>
</dbReference>
<dbReference type="HAMAP" id="MF_00212">
    <property type="entry name" value="MQO"/>
    <property type="match status" value="1"/>
</dbReference>
<dbReference type="InterPro" id="IPR036188">
    <property type="entry name" value="FAD/NAD-bd_sf"/>
</dbReference>
<dbReference type="InterPro" id="IPR006231">
    <property type="entry name" value="MQO"/>
</dbReference>
<dbReference type="NCBIfam" id="TIGR01320">
    <property type="entry name" value="mal_quin_oxido"/>
    <property type="match status" value="1"/>
</dbReference>
<dbReference type="NCBIfam" id="NF003603">
    <property type="entry name" value="PRK05257.1-1"/>
    <property type="match status" value="1"/>
</dbReference>
<dbReference type="NCBIfam" id="NF003605">
    <property type="entry name" value="PRK05257.1-4"/>
    <property type="match status" value="1"/>
</dbReference>
<dbReference type="NCBIfam" id="NF003606">
    <property type="entry name" value="PRK05257.2-1"/>
    <property type="match status" value="1"/>
</dbReference>
<dbReference type="NCBIfam" id="NF003608">
    <property type="entry name" value="PRK05257.2-4"/>
    <property type="match status" value="1"/>
</dbReference>
<dbReference type="NCBIfam" id="NF003611">
    <property type="entry name" value="PRK05257.3-2"/>
    <property type="match status" value="1"/>
</dbReference>
<dbReference type="NCBIfam" id="NF009875">
    <property type="entry name" value="PRK13339.1"/>
    <property type="match status" value="1"/>
</dbReference>
<dbReference type="PANTHER" id="PTHR43104">
    <property type="entry name" value="L-2-HYDROXYGLUTARATE DEHYDROGENASE, MITOCHONDRIAL"/>
    <property type="match status" value="1"/>
</dbReference>
<dbReference type="PANTHER" id="PTHR43104:SF2">
    <property type="entry name" value="L-2-HYDROXYGLUTARATE DEHYDROGENASE, MITOCHONDRIAL"/>
    <property type="match status" value="1"/>
</dbReference>
<dbReference type="Pfam" id="PF06039">
    <property type="entry name" value="Mqo"/>
    <property type="match status" value="1"/>
</dbReference>
<dbReference type="SUPFAM" id="SSF51905">
    <property type="entry name" value="FAD/NAD(P)-binding domain"/>
    <property type="match status" value="1"/>
</dbReference>
<gene>
    <name evidence="1" type="primary">mqo</name>
    <name type="ordered locus">GbCGDNIH1_1044</name>
</gene>
<feature type="chain" id="PRO_1000023804" description="Probable malate:quinone oxidoreductase">
    <location>
        <begin position="1"/>
        <end position="498"/>
    </location>
</feature>
<evidence type="ECO:0000255" key="1">
    <source>
        <dbReference type="HAMAP-Rule" id="MF_00212"/>
    </source>
</evidence>
<organism>
    <name type="scientific">Granulibacter bethesdensis (strain ATCC BAA-1260 / CGDNIH1)</name>
    <dbReference type="NCBI Taxonomy" id="391165"/>
    <lineage>
        <taxon>Bacteria</taxon>
        <taxon>Pseudomonadati</taxon>
        <taxon>Pseudomonadota</taxon>
        <taxon>Alphaproteobacteria</taxon>
        <taxon>Acetobacterales</taxon>
        <taxon>Acetobacteraceae</taxon>
        <taxon>Granulibacter</taxon>
    </lineage>
</organism>
<comment type="catalytic activity">
    <reaction evidence="1">
        <text>(S)-malate + a quinone = a quinol + oxaloacetate</text>
        <dbReference type="Rhea" id="RHEA:46012"/>
        <dbReference type="ChEBI" id="CHEBI:15589"/>
        <dbReference type="ChEBI" id="CHEBI:16452"/>
        <dbReference type="ChEBI" id="CHEBI:24646"/>
        <dbReference type="ChEBI" id="CHEBI:132124"/>
        <dbReference type="EC" id="1.1.5.4"/>
    </reaction>
</comment>
<comment type="cofactor">
    <cofactor evidence="1">
        <name>FAD</name>
        <dbReference type="ChEBI" id="CHEBI:57692"/>
    </cofactor>
</comment>
<comment type="pathway">
    <text evidence="1">Carbohydrate metabolism; tricarboxylic acid cycle; oxaloacetate from (S)-malate (quinone route): step 1/1.</text>
</comment>
<comment type="similarity">
    <text evidence="1">Belongs to the MQO family.</text>
</comment>
<name>MQO_GRABC</name>
<protein>
    <recommendedName>
        <fullName evidence="1">Probable malate:quinone oxidoreductase</fullName>
        <ecNumber evidence="1">1.1.5.4</ecNumber>
    </recommendedName>
    <alternativeName>
        <fullName evidence="1">MQO</fullName>
    </alternativeName>
    <alternativeName>
        <fullName evidence="1">Malate dehydrogenase [quinone]</fullName>
    </alternativeName>
</protein>